<comment type="function">
    <text evidence="4 5">Substrate-recognition subunit of protein phosphatase 2A (PP2A) that plays a key role in cell cycle by controlling mitosis entry and exit. Involved in chromosome clustering during late mitosis by mediating dephosphorylation of MKI67 (By similarity). The activity of PP2A complexes containing PPP2R2D (PR55-delta) fluctuate during the cell cycle: the activity is high in interphase and low in mitosis (By similarity).</text>
</comment>
<comment type="subunit">
    <text evidence="1 3">PP2A consists of a common heterodimeric core enzyme, composed of a 36 kDa catalytic subunit (subunit C) and a 65 kDa constant regulatory subunit (PR65 or subunit A), that associates with a variety of regulatory subunits. Proteins that associate with the core dimer include three families of regulatory subunits B (the R2/B/PR55/B55, R3/B''/PR72/PR130/PR59 and R5/B'/B56 families), the 48 kDa variable regulatory subunit, viral proteins, and cell signaling molecules. Interacts with ENSA (when phosphorylated at 'Ser-67') and ARPP19 (when phosphorylated at 'Ser-62'), leading to inhibit PP2A activity (By similarity). Interacts with IER5 (By similarity).</text>
</comment>
<comment type="subcellular location">
    <subcellularLocation>
        <location evidence="7">Cytoplasm</location>
    </subcellularLocation>
</comment>
<comment type="tissue specificity">
    <text evidence="7">Widely expressed with high levels in brain, heart, placenta, skeletal muscle, testis, thymus and spleen.</text>
</comment>
<comment type="similarity">
    <text evidence="8">Belongs to the phosphatase 2A regulatory subunit B family.</text>
</comment>
<keyword id="KW-0131">Cell cycle</keyword>
<keyword id="KW-0132">Cell division</keyword>
<keyword id="KW-0963">Cytoplasm</keyword>
<keyword id="KW-0498">Mitosis</keyword>
<keyword id="KW-0597">Phosphoprotein</keyword>
<keyword id="KW-1185">Reference proteome</keyword>
<keyword id="KW-0677">Repeat</keyword>
<keyword id="KW-0853">WD repeat</keyword>
<sequence>MAGAGGGGCPTGGNDFQWCFSQVKGAVDEDVAEADIISTVEFNYSGDLLATGDKGGRVVIFQREQENKGRAHSRGEYNVYSTFQSHEPEFDYLKSLEIEEKINKIRWLPQQNAAHFLLSTNDKTIKLWKISERDKRAEGYNLKDEDGRLRDPFRITALRVPILKPMDLMVEASPRRIFANAHTYHINSISVNSDHETYLSADDLRINLWHLEITDRSFNIVDIKPANMEELTEVITAAEFHPHQCNVFVYSSSKGTIRLCDMRSSALCDRHAKFFEEPEDPSSRSFFSEIISSISDVKFSHSGRYMMTRDYLSVKVWDLNMEGRPVETHHVHEYLRSKLCSLYENDCIFDKFECCWNGSDSAIMTGSYNNFFRMFDRNTRRDVTLEASRENSKPRASLKPRKVCSGGKRKKDEISVDSLDFNKKILHTAWHPMESIIAVAATNNLYIFQDKIN</sequence>
<name>2ABD_RAT</name>
<protein>
    <recommendedName>
        <fullName>Serine/threonine-protein phosphatase 2A 55 kDa regulatory subunit B delta isoform</fullName>
    </recommendedName>
    <alternativeName>
        <fullName>PP2A subunit B isoform B55-delta</fullName>
    </alternativeName>
    <alternativeName>
        <fullName>PP2A subunit B isoform PR55-delta</fullName>
    </alternativeName>
    <alternativeName>
        <fullName>PP2A subunit B isoform R2-delta</fullName>
    </alternativeName>
    <alternativeName>
        <fullName>PP2A subunit B isoform delta</fullName>
    </alternativeName>
</protein>
<proteinExistence type="evidence at transcript level"/>
<accession>P56932</accession>
<accession>Q66HR7</accession>
<reference key="1">
    <citation type="journal article" date="1999" name="FEBS Lett.">
        <title>Cloning and characterization of B delta, a novel regulatory subunit of protein phosphatase 2A.</title>
        <authorList>
            <person name="Strack S."/>
            <person name="Chang D."/>
            <person name="Zaucha J.A."/>
            <person name="Colbran R.J."/>
            <person name="Wadzinski B.E."/>
        </authorList>
    </citation>
    <scope>NUCLEOTIDE SEQUENCE [MRNA]</scope>
    <scope>SUBCELLULAR LOCATION</scope>
    <scope>TISSUE SPECIFICITY</scope>
    <source>
        <strain>Sprague-Dawley</strain>
        <tissue>Brain</tissue>
    </source>
</reference>
<reference key="2">
    <citation type="journal article" date="2004" name="Genome Res.">
        <title>The status, quality, and expansion of the NIH full-length cDNA project: the Mammalian Gene Collection (MGC).</title>
        <authorList>
            <consortium name="The MGC Project Team"/>
        </authorList>
    </citation>
    <scope>NUCLEOTIDE SEQUENCE [LARGE SCALE MRNA]</scope>
    <source>
        <tissue>Testis</tissue>
    </source>
</reference>
<gene>
    <name type="primary">Ppp2r2d</name>
</gene>
<evidence type="ECO:0000250" key="1"/>
<evidence type="ECO:0000250" key="2">
    <source>
        <dbReference type="UniProtKB" id="P36877"/>
    </source>
</evidence>
<evidence type="ECO:0000250" key="3">
    <source>
        <dbReference type="UniProtKB" id="Q66LE6"/>
    </source>
</evidence>
<evidence type="ECO:0000250" key="4">
    <source>
        <dbReference type="UniProtKB" id="Q7ZX64"/>
    </source>
</evidence>
<evidence type="ECO:0000250" key="5">
    <source>
        <dbReference type="UniProtKB" id="Q925E7"/>
    </source>
</evidence>
<evidence type="ECO:0000256" key="6">
    <source>
        <dbReference type="SAM" id="MobiDB-lite"/>
    </source>
</evidence>
<evidence type="ECO:0000269" key="7">
    <source>
    </source>
</evidence>
<evidence type="ECO:0000305" key="8"/>
<feature type="chain" id="PRO_0000071435" description="Serine/threonine-protein phosphatase 2A 55 kDa regulatory subunit B delta isoform">
    <location>
        <begin position="1"/>
        <end position="453"/>
    </location>
</feature>
<feature type="repeat" description="WD 1">
    <location>
        <begin position="32"/>
        <end position="71"/>
    </location>
</feature>
<feature type="repeat" description="WD 2">
    <location>
        <begin position="97"/>
        <end position="138"/>
    </location>
</feature>
<feature type="repeat" description="WD 3">
    <location>
        <begin position="181"/>
        <end position="219"/>
    </location>
</feature>
<feature type="repeat" description="WD 4">
    <location>
        <begin position="230"/>
        <end position="270"/>
    </location>
</feature>
<feature type="repeat" description="WD 5">
    <location>
        <begin position="289"/>
        <end position="327"/>
    </location>
</feature>
<feature type="repeat" description="WD 6">
    <location>
        <begin position="344"/>
        <end position="385"/>
    </location>
</feature>
<feature type="repeat" description="WD 7">
    <location>
        <begin position="420"/>
        <end position="452"/>
    </location>
</feature>
<feature type="region of interest" description="Disordered" evidence="6">
    <location>
        <begin position="385"/>
        <end position="406"/>
    </location>
</feature>
<feature type="modified residue" description="Phosphoserine" evidence="2">
    <location>
        <position position="285"/>
    </location>
</feature>
<feature type="modified residue" description="Phosphotyrosine" evidence="2">
    <location>
        <position position="305"/>
    </location>
</feature>
<feature type="modified residue" description="Phosphothreonine" evidence="2">
    <location>
        <position position="308"/>
    </location>
</feature>
<feature type="sequence conflict" description="In Ref. 2; AAH81720." evidence="8" ref="2">
    <original>H</original>
    <variation>Q</variation>
    <location>
        <position position="330"/>
    </location>
</feature>
<dbReference type="EMBL" id="AF180350">
    <property type="protein sequence ID" value="AAF08536.1"/>
    <property type="molecule type" value="mRNA"/>
</dbReference>
<dbReference type="EMBL" id="BC081720">
    <property type="protein sequence ID" value="AAH81720.1"/>
    <property type="molecule type" value="mRNA"/>
</dbReference>
<dbReference type="RefSeq" id="NP_653347.2">
    <property type="nucleotide sequence ID" value="NM_144746.2"/>
</dbReference>
<dbReference type="SMR" id="P56932"/>
<dbReference type="FunCoup" id="P56932">
    <property type="interactions" value="2048"/>
</dbReference>
<dbReference type="STRING" id="10116.ENSRNOP00000023139"/>
<dbReference type="PhosphoSitePlus" id="P56932"/>
<dbReference type="jPOST" id="P56932"/>
<dbReference type="PaxDb" id="10116-ENSRNOP00000023139"/>
<dbReference type="GeneID" id="246255"/>
<dbReference type="KEGG" id="rno:246255"/>
<dbReference type="UCSC" id="RGD:708356">
    <property type="organism name" value="rat"/>
</dbReference>
<dbReference type="AGR" id="RGD:708356"/>
<dbReference type="CTD" id="55844"/>
<dbReference type="RGD" id="708356">
    <property type="gene designation" value="Ppp2r2d"/>
</dbReference>
<dbReference type="eggNOG" id="KOG1354">
    <property type="taxonomic scope" value="Eukaryota"/>
</dbReference>
<dbReference type="InParanoid" id="P56932"/>
<dbReference type="OrthoDB" id="6274823at2759"/>
<dbReference type="PhylomeDB" id="P56932"/>
<dbReference type="TreeFam" id="TF105553"/>
<dbReference type="PRO" id="PR:P56932"/>
<dbReference type="Proteomes" id="UP000002494">
    <property type="component" value="Unplaced"/>
</dbReference>
<dbReference type="GO" id="GO:0005829">
    <property type="term" value="C:cytosol"/>
    <property type="evidence" value="ECO:0000318"/>
    <property type="project" value="GO_Central"/>
</dbReference>
<dbReference type="GO" id="GO:0005654">
    <property type="term" value="C:nucleoplasm"/>
    <property type="evidence" value="ECO:0000304"/>
    <property type="project" value="Reactome"/>
</dbReference>
<dbReference type="GO" id="GO:0000159">
    <property type="term" value="C:protein phosphatase type 2A complex"/>
    <property type="evidence" value="ECO:0000250"/>
    <property type="project" value="UniProtKB"/>
</dbReference>
<dbReference type="GO" id="GO:0140767">
    <property type="term" value="F:enzyme-substrate adaptor activity"/>
    <property type="evidence" value="ECO:0000250"/>
    <property type="project" value="UniProtKB"/>
</dbReference>
<dbReference type="GO" id="GO:0019888">
    <property type="term" value="F:protein phosphatase regulator activity"/>
    <property type="evidence" value="ECO:0000250"/>
    <property type="project" value="UniProtKB"/>
</dbReference>
<dbReference type="GO" id="GO:0051301">
    <property type="term" value="P:cell division"/>
    <property type="evidence" value="ECO:0007669"/>
    <property type="project" value="UniProtKB-KW"/>
</dbReference>
<dbReference type="GO" id="GO:0010458">
    <property type="term" value="P:exit from mitosis"/>
    <property type="evidence" value="ECO:0000250"/>
    <property type="project" value="UniProtKB"/>
</dbReference>
<dbReference type="GO" id="GO:0000278">
    <property type="term" value="P:mitotic cell cycle"/>
    <property type="evidence" value="ECO:0000250"/>
    <property type="project" value="UniProtKB"/>
</dbReference>
<dbReference type="GO" id="GO:0051983">
    <property type="term" value="P:regulation of chromosome segregation"/>
    <property type="evidence" value="ECO:0000250"/>
    <property type="project" value="UniProtKB"/>
</dbReference>
<dbReference type="FunFam" id="2.130.10.10:FF:000002">
    <property type="entry name" value="Serine/threonine-protein phosphatase 2A 55 kDa regulatory subunit B"/>
    <property type="match status" value="1"/>
</dbReference>
<dbReference type="Gene3D" id="2.130.10.10">
    <property type="entry name" value="YVTN repeat-like/Quinoprotein amine dehydrogenase"/>
    <property type="match status" value="1"/>
</dbReference>
<dbReference type="InterPro" id="IPR000009">
    <property type="entry name" value="PP2A_PR55"/>
</dbReference>
<dbReference type="InterPro" id="IPR018067">
    <property type="entry name" value="PP2A_PR55_CS"/>
</dbReference>
<dbReference type="InterPro" id="IPR015943">
    <property type="entry name" value="WD40/YVTN_repeat-like_dom_sf"/>
</dbReference>
<dbReference type="InterPro" id="IPR036322">
    <property type="entry name" value="WD40_repeat_dom_sf"/>
</dbReference>
<dbReference type="InterPro" id="IPR001680">
    <property type="entry name" value="WD40_rpt"/>
</dbReference>
<dbReference type="PANTHER" id="PTHR11871">
    <property type="entry name" value="PROTEIN PHOSPHATASE PP2A REGULATORY SUBUNIT B"/>
    <property type="match status" value="1"/>
</dbReference>
<dbReference type="PIRSF" id="PIRSF037309">
    <property type="entry name" value="PP2A_PR55"/>
    <property type="match status" value="1"/>
</dbReference>
<dbReference type="PRINTS" id="PR00600">
    <property type="entry name" value="PP2APR55"/>
</dbReference>
<dbReference type="SMART" id="SM00320">
    <property type="entry name" value="WD40"/>
    <property type="match status" value="7"/>
</dbReference>
<dbReference type="SUPFAM" id="SSF50978">
    <property type="entry name" value="WD40 repeat-like"/>
    <property type="match status" value="1"/>
</dbReference>
<dbReference type="PROSITE" id="PS01024">
    <property type="entry name" value="PR55_1"/>
    <property type="match status" value="1"/>
</dbReference>
<dbReference type="PROSITE" id="PS01025">
    <property type="entry name" value="PR55_2"/>
    <property type="match status" value="1"/>
</dbReference>
<organism>
    <name type="scientific">Rattus norvegicus</name>
    <name type="common">Rat</name>
    <dbReference type="NCBI Taxonomy" id="10116"/>
    <lineage>
        <taxon>Eukaryota</taxon>
        <taxon>Metazoa</taxon>
        <taxon>Chordata</taxon>
        <taxon>Craniata</taxon>
        <taxon>Vertebrata</taxon>
        <taxon>Euteleostomi</taxon>
        <taxon>Mammalia</taxon>
        <taxon>Eutheria</taxon>
        <taxon>Euarchontoglires</taxon>
        <taxon>Glires</taxon>
        <taxon>Rodentia</taxon>
        <taxon>Myomorpha</taxon>
        <taxon>Muroidea</taxon>
        <taxon>Muridae</taxon>
        <taxon>Murinae</taxon>
        <taxon>Rattus</taxon>
    </lineage>
</organism>